<name>Y819_PSEE4</name>
<accession>Q1IF21</accession>
<reference key="1">
    <citation type="journal article" date="2006" name="Nat. Biotechnol.">
        <title>Complete genome sequence of the entomopathogenic and metabolically versatile soil bacterium Pseudomonas entomophila.</title>
        <authorList>
            <person name="Vodovar N."/>
            <person name="Vallenet D."/>
            <person name="Cruveiller S."/>
            <person name="Rouy Z."/>
            <person name="Barbe V."/>
            <person name="Acosta C."/>
            <person name="Cattolico L."/>
            <person name="Jubin C."/>
            <person name="Lajus A."/>
            <person name="Segurens B."/>
            <person name="Vacherie B."/>
            <person name="Wincker P."/>
            <person name="Weissenbach J."/>
            <person name="Lemaitre B."/>
            <person name="Medigue C."/>
            <person name="Boccard F."/>
        </authorList>
    </citation>
    <scope>NUCLEOTIDE SEQUENCE [LARGE SCALE GENOMIC DNA]</scope>
    <source>
        <strain>L48</strain>
    </source>
</reference>
<dbReference type="EMBL" id="CT573326">
    <property type="protein sequence ID" value="CAK13733.1"/>
    <property type="molecule type" value="Genomic_DNA"/>
</dbReference>
<dbReference type="RefSeq" id="WP_011532163.1">
    <property type="nucleotide sequence ID" value="NC_008027.1"/>
</dbReference>
<dbReference type="STRING" id="384676.PSEEN0819"/>
<dbReference type="GeneID" id="32804125"/>
<dbReference type="KEGG" id="pen:PSEEN0819"/>
<dbReference type="eggNOG" id="COG2862">
    <property type="taxonomic scope" value="Bacteria"/>
</dbReference>
<dbReference type="HOGENOM" id="CLU_097887_1_1_6"/>
<dbReference type="OrthoDB" id="9783569at2"/>
<dbReference type="Proteomes" id="UP000000658">
    <property type="component" value="Chromosome"/>
</dbReference>
<dbReference type="GO" id="GO:0005886">
    <property type="term" value="C:plasma membrane"/>
    <property type="evidence" value="ECO:0007669"/>
    <property type="project" value="UniProtKB-SubCell"/>
</dbReference>
<dbReference type="HAMAP" id="MF_00143">
    <property type="entry name" value="UPF0114"/>
    <property type="match status" value="1"/>
</dbReference>
<dbReference type="InterPro" id="IPR005134">
    <property type="entry name" value="UPF0114"/>
</dbReference>
<dbReference type="InterPro" id="IPR020761">
    <property type="entry name" value="UPF0114_bac"/>
</dbReference>
<dbReference type="NCBIfam" id="TIGR00645">
    <property type="entry name" value="HI0507"/>
    <property type="match status" value="1"/>
</dbReference>
<dbReference type="PANTHER" id="PTHR38596">
    <property type="entry name" value="UPF0114 PROTEIN YQHA"/>
    <property type="match status" value="1"/>
</dbReference>
<dbReference type="PANTHER" id="PTHR38596:SF1">
    <property type="entry name" value="UPF0114 PROTEIN YQHA"/>
    <property type="match status" value="1"/>
</dbReference>
<dbReference type="Pfam" id="PF03350">
    <property type="entry name" value="UPF0114"/>
    <property type="match status" value="1"/>
</dbReference>
<feature type="chain" id="PRO_1000009485" description="UPF0114 protein PSEEN0819">
    <location>
        <begin position="1"/>
        <end position="162"/>
    </location>
</feature>
<feature type="transmembrane region" description="Helical" evidence="1">
    <location>
        <begin position="15"/>
        <end position="35"/>
    </location>
</feature>
<feature type="transmembrane region" description="Helical" evidence="1">
    <location>
        <begin position="53"/>
        <end position="73"/>
    </location>
</feature>
<feature type="transmembrane region" description="Helical" evidence="1">
    <location>
        <begin position="136"/>
        <end position="156"/>
    </location>
</feature>
<gene>
    <name type="ordered locus">PSEEN0819</name>
</gene>
<comment type="subcellular location">
    <subcellularLocation>
        <location evidence="1">Cell membrane</location>
        <topology evidence="1">Multi-pass membrane protein</topology>
    </subcellularLocation>
</comment>
<comment type="similarity">
    <text evidence="1">Belongs to the UPF0114 family.</text>
</comment>
<protein>
    <recommendedName>
        <fullName evidence="1">UPF0114 protein PSEEN0819</fullName>
    </recommendedName>
</protein>
<sequence>MERILENAMYASRWLLAPIYFGLSLGLLALALKFFQEIIHVLPNVFTLAEADLVLVILSLIDMSLVGGLLVMVMISGYENFVSQLDIDDSKEKLSWLGKMDSSSLKMKVAASIVAISSIHLLRVFMDAQNISTDYLMWYVIIHMTFVVSAFVMGYLDRITKH</sequence>
<keyword id="KW-1003">Cell membrane</keyword>
<keyword id="KW-0472">Membrane</keyword>
<keyword id="KW-0812">Transmembrane</keyword>
<keyword id="KW-1133">Transmembrane helix</keyword>
<evidence type="ECO:0000255" key="1">
    <source>
        <dbReference type="HAMAP-Rule" id="MF_00143"/>
    </source>
</evidence>
<proteinExistence type="inferred from homology"/>
<organism>
    <name type="scientific">Pseudomonas entomophila (strain L48)</name>
    <dbReference type="NCBI Taxonomy" id="384676"/>
    <lineage>
        <taxon>Bacteria</taxon>
        <taxon>Pseudomonadati</taxon>
        <taxon>Pseudomonadota</taxon>
        <taxon>Gammaproteobacteria</taxon>
        <taxon>Pseudomonadales</taxon>
        <taxon>Pseudomonadaceae</taxon>
        <taxon>Pseudomonas</taxon>
    </lineage>
</organism>